<dbReference type="EC" id="7.1.1.-" evidence="1"/>
<dbReference type="EMBL" id="CP000249">
    <property type="protein sequence ID" value="ABD09932.1"/>
    <property type="molecule type" value="Genomic_DNA"/>
</dbReference>
<dbReference type="RefSeq" id="WP_011435008.1">
    <property type="nucleotide sequence ID" value="NZ_MSEA01000327.1"/>
</dbReference>
<dbReference type="SMR" id="Q2JFL0"/>
<dbReference type="STRING" id="106370.Francci3_0548"/>
<dbReference type="KEGG" id="fra:Francci3_0548"/>
<dbReference type="eggNOG" id="COG0713">
    <property type="taxonomic scope" value="Bacteria"/>
</dbReference>
<dbReference type="HOGENOM" id="CLU_144724_0_0_11"/>
<dbReference type="OrthoDB" id="9810120at2"/>
<dbReference type="PhylomeDB" id="Q2JFL0"/>
<dbReference type="Proteomes" id="UP000001937">
    <property type="component" value="Chromosome"/>
</dbReference>
<dbReference type="GO" id="GO:0030964">
    <property type="term" value="C:NADH dehydrogenase complex"/>
    <property type="evidence" value="ECO:0007669"/>
    <property type="project" value="TreeGrafter"/>
</dbReference>
<dbReference type="GO" id="GO:0005886">
    <property type="term" value="C:plasma membrane"/>
    <property type="evidence" value="ECO:0007669"/>
    <property type="project" value="UniProtKB-SubCell"/>
</dbReference>
<dbReference type="GO" id="GO:0050136">
    <property type="term" value="F:NADH:ubiquinone reductase (non-electrogenic) activity"/>
    <property type="evidence" value="ECO:0007669"/>
    <property type="project" value="UniProtKB-UniRule"/>
</dbReference>
<dbReference type="GO" id="GO:0048038">
    <property type="term" value="F:quinone binding"/>
    <property type="evidence" value="ECO:0007669"/>
    <property type="project" value="UniProtKB-KW"/>
</dbReference>
<dbReference type="GO" id="GO:0042773">
    <property type="term" value="P:ATP synthesis coupled electron transport"/>
    <property type="evidence" value="ECO:0007669"/>
    <property type="project" value="InterPro"/>
</dbReference>
<dbReference type="FunFam" id="1.10.287.3510:FF:000001">
    <property type="entry name" value="NADH-quinone oxidoreductase subunit K"/>
    <property type="match status" value="1"/>
</dbReference>
<dbReference type="Gene3D" id="1.10.287.3510">
    <property type="match status" value="1"/>
</dbReference>
<dbReference type="HAMAP" id="MF_01456">
    <property type="entry name" value="NDH1_NuoK"/>
    <property type="match status" value="1"/>
</dbReference>
<dbReference type="InterPro" id="IPR001133">
    <property type="entry name" value="NADH_UbQ_OxRdtase_chain4L/K"/>
</dbReference>
<dbReference type="InterPro" id="IPR039428">
    <property type="entry name" value="NUOK/Mnh_C1-like"/>
</dbReference>
<dbReference type="NCBIfam" id="NF004320">
    <property type="entry name" value="PRK05715.1-2"/>
    <property type="match status" value="1"/>
</dbReference>
<dbReference type="NCBIfam" id="NF004321">
    <property type="entry name" value="PRK05715.1-3"/>
    <property type="match status" value="1"/>
</dbReference>
<dbReference type="NCBIfam" id="NF004323">
    <property type="entry name" value="PRK05715.1-5"/>
    <property type="match status" value="1"/>
</dbReference>
<dbReference type="PANTHER" id="PTHR11434:SF21">
    <property type="entry name" value="NADH DEHYDROGENASE SUBUNIT 4L-RELATED"/>
    <property type="match status" value="1"/>
</dbReference>
<dbReference type="PANTHER" id="PTHR11434">
    <property type="entry name" value="NADH-UBIQUINONE OXIDOREDUCTASE SUBUNIT ND4L"/>
    <property type="match status" value="1"/>
</dbReference>
<dbReference type="Pfam" id="PF00420">
    <property type="entry name" value="Oxidored_q2"/>
    <property type="match status" value="1"/>
</dbReference>
<proteinExistence type="inferred from homology"/>
<sequence length="99" mass="10814">MNPANYLILSALLFTIGTVGVLVRRNAIVVFMSVELMLNAVNLTLVTFSRIHGTLDGQIMAFFVMVVAAAEVVIGLAIILSIFRTRRSASVDDVNLLKY</sequence>
<keyword id="KW-1003">Cell membrane</keyword>
<keyword id="KW-0472">Membrane</keyword>
<keyword id="KW-0520">NAD</keyword>
<keyword id="KW-0874">Quinone</keyword>
<keyword id="KW-1185">Reference proteome</keyword>
<keyword id="KW-1278">Translocase</keyword>
<keyword id="KW-0812">Transmembrane</keyword>
<keyword id="KW-1133">Transmembrane helix</keyword>
<keyword id="KW-0813">Transport</keyword>
<comment type="function">
    <text evidence="1">NDH-1 shuttles electrons from NADH, via FMN and iron-sulfur (Fe-S) centers, to quinones in the respiratory chain. The immediate electron acceptor for the enzyme in this species is believed to be a menaquinone. Couples the redox reaction to proton translocation (for every two electrons transferred, four hydrogen ions are translocated across the cytoplasmic membrane), and thus conserves the redox energy in a proton gradient.</text>
</comment>
<comment type="catalytic activity">
    <reaction evidence="1">
        <text>a quinone + NADH + 5 H(+)(in) = a quinol + NAD(+) + 4 H(+)(out)</text>
        <dbReference type="Rhea" id="RHEA:57888"/>
        <dbReference type="ChEBI" id="CHEBI:15378"/>
        <dbReference type="ChEBI" id="CHEBI:24646"/>
        <dbReference type="ChEBI" id="CHEBI:57540"/>
        <dbReference type="ChEBI" id="CHEBI:57945"/>
        <dbReference type="ChEBI" id="CHEBI:132124"/>
    </reaction>
</comment>
<comment type="subunit">
    <text evidence="1">NDH-1 is composed of 14 different subunits. Subunits NuoA, H, J, K, L, M, N constitute the membrane sector of the complex.</text>
</comment>
<comment type="subcellular location">
    <subcellularLocation>
        <location evidence="1">Cell membrane</location>
        <topology evidence="1">Multi-pass membrane protein</topology>
    </subcellularLocation>
</comment>
<comment type="similarity">
    <text evidence="1">Belongs to the complex I subunit 4L family.</text>
</comment>
<reference key="1">
    <citation type="journal article" date="2007" name="Genome Res.">
        <title>Genome characteristics of facultatively symbiotic Frankia sp. strains reflect host range and host plant biogeography.</title>
        <authorList>
            <person name="Normand P."/>
            <person name="Lapierre P."/>
            <person name="Tisa L.S."/>
            <person name="Gogarten J.P."/>
            <person name="Alloisio N."/>
            <person name="Bagnarol E."/>
            <person name="Bassi C.A."/>
            <person name="Berry A.M."/>
            <person name="Bickhart D.M."/>
            <person name="Choisne N."/>
            <person name="Couloux A."/>
            <person name="Cournoyer B."/>
            <person name="Cruveiller S."/>
            <person name="Daubin V."/>
            <person name="Demange N."/>
            <person name="Francino M.P."/>
            <person name="Goltsman E."/>
            <person name="Huang Y."/>
            <person name="Kopp O.R."/>
            <person name="Labarre L."/>
            <person name="Lapidus A."/>
            <person name="Lavire C."/>
            <person name="Marechal J."/>
            <person name="Martinez M."/>
            <person name="Mastronunzio J.E."/>
            <person name="Mullin B.C."/>
            <person name="Niemann J."/>
            <person name="Pujic P."/>
            <person name="Rawnsley T."/>
            <person name="Rouy Z."/>
            <person name="Schenowitz C."/>
            <person name="Sellstedt A."/>
            <person name="Tavares F."/>
            <person name="Tomkins J.P."/>
            <person name="Vallenet D."/>
            <person name="Valverde C."/>
            <person name="Wall L.G."/>
            <person name="Wang Y."/>
            <person name="Medigue C."/>
            <person name="Benson D.R."/>
        </authorList>
    </citation>
    <scope>NUCLEOTIDE SEQUENCE [LARGE SCALE GENOMIC DNA]</scope>
    <source>
        <strain>DSM 45818 / CECT 9043 / HFP020203 / CcI3</strain>
    </source>
</reference>
<evidence type="ECO:0000255" key="1">
    <source>
        <dbReference type="HAMAP-Rule" id="MF_01456"/>
    </source>
</evidence>
<feature type="chain" id="PRO_0000390070" description="NADH-quinone oxidoreductase subunit K">
    <location>
        <begin position="1"/>
        <end position="99"/>
    </location>
</feature>
<feature type="transmembrane region" description="Helical" evidence="1">
    <location>
        <begin position="3"/>
        <end position="23"/>
    </location>
</feature>
<feature type="transmembrane region" description="Helical" evidence="1">
    <location>
        <begin position="28"/>
        <end position="48"/>
    </location>
</feature>
<feature type="transmembrane region" description="Helical" evidence="1">
    <location>
        <begin position="59"/>
        <end position="79"/>
    </location>
</feature>
<name>NUOK_FRACC</name>
<accession>Q2JFL0</accession>
<organism>
    <name type="scientific">Frankia casuarinae (strain DSM 45818 / CECT 9043 / HFP020203 / CcI3)</name>
    <dbReference type="NCBI Taxonomy" id="106370"/>
    <lineage>
        <taxon>Bacteria</taxon>
        <taxon>Bacillati</taxon>
        <taxon>Actinomycetota</taxon>
        <taxon>Actinomycetes</taxon>
        <taxon>Frankiales</taxon>
        <taxon>Frankiaceae</taxon>
        <taxon>Frankia</taxon>
    </lineage>
</organism>
<gene>
    <name evidence="1" type="primary">nuoK</name>
    <name type="ordered locus">Francci3_0548</name>
</gene>
<protein>
    <recommendedName>
        <fullName evidence="1">NADH-quinone oxidoreductase subunit K</fullName>
        <ecNumber evidence="1">7.1.1.-</ecNumber>
    </recommendedName>
    <alternativeName>
        <fullName evidence="1">NADH dehydrogenase I subunit K</fullName>
    </alternativeName>
    <alternativeName>
        <fullName evidence="1">NDH-1 subunit K</fullName>
    </alternativeName>
</protein>